<organism>
    <name type="scientific">Streptococcus agalactiae serotype Ia (strain ATCC 27591 / A909 / CDC SS700)</name>
    <dbReference type="NCBI Taxonomy" id="205921"/>
    <lineage>
        <taxon>Bacteria</taxon>
        <taxon>Bacillati</taxon>
        <taxon>Bacillota</taxon>
        <taxon>Bacilli</taxon>
        <taxon>Lactobacillales</taxon>
        <taxon>Streptococcaceae</taxon>
        <taxon>Streptococcus</taxon>
    </lineage>
</organism>
<name>ATPD_STRA1</name>
<sequence length="178" mass="20037">MNKKTQALIEQYSKSLVEVAIEHKIVEKIQQEVAALIDIFETSELEGVLSSLAVSHDEKQHFVKTLQTSCSTYLVNFLEVIVQNEREALLYPILKSIDQELIKVNGQYPIQITTAVALSPEQKERLFDIAKTKLALPNGQLVEHIDPSIVGGFVVNANNKVIDASVRNQLHQFKMKLK</sequence>
<gene>
    <name evidence="1" type="primary">atpH</name>
    <name type="ordered locus">SAK_0983</name>
</gene>
<comment type="function">
    <text evidence="1">F(1)F(0) ATP synthase produces ATP from ADP in the presence of a proton or sodium gradient. F-type ATPases consist of two structural domains, F(1) containing the extramembraneous catalytic core and F(0) containing the membrane proton channel, linked together by a central stalk and a peripheral stalk. During catalysis, ATP synthesis in the catalytic domain of F(1) is coupled via a rotary mechanism of the central stalk subunits to proton translocation.</text>
</comment>
<comment type="function">
    <text evidence="1">This protein is part of the stalk that links CF(0) to CF(1). It either transmits conformational changes from CF(0) to CF(1) or is implicated in proton conduction.</text>
</comment>
<comment type="subunit">
    <text evidence="1">F-type ATPases have 2 components, F(1) - the catalytic core - and F(0) - the membrane proton channel. F(1) has five subunits: alpha(3), beta(3), gamma(1), delta(1), epsilon(1). F(0) has three main subunits: a(1), b(2) and c(10-14). The alpha and beta chains form an alternating ring which encloses part of the gamma chain. F(1) is attached to F(0) by a central stalk formed by the gamma and epsilon chains, while a peripheral stalk is formed by the delta and b chains.</text>
</comment>
<comment type="subcellular location">
    <subcellularLocation>
        <location evidence="1">Cell membrane</location>
        <topology evidence="1">Peripheral membrane protein</topology>
    </subcellularLocation>
</comment>
<comment type="similarity">
    <text evidence="1">Belongs to the ATPase delta chain family.</text>
</comment>
<keyword id="KW-0066">ATP synthesis</keyword>
<keyword id="KW-1003">Cell membrane</keyword>
<keyword id="KW-0139">CF(1)</keyword>
<keyword id="KW-0375">Hydrogen ion transport</keyword>
<keyword id="KW-0406">Ion transport</keyword>
<keyword id="KW-0472">Membrane</keyword>
<keyword id="KW-0813">Transport</keyword>
<accession>Q3K1J8</accession>
<feature type="chain" id="PRO_1000184804" description="ATP synthase subunit delta">
    <location>
        <begin position="1"/>
        <end position="178"/>
    </location>
</feature>
<evidence type="ECO:0000255" key="1">
    <source>
        <dbReference type="HAMAP-Rule" id="MF_01416"/>
    </source>
</evidence>
<reference key="1">
    <citation type="journal article" date="2005" name="Proc. Natl. Acad. Sci. U.S.A.">
        <title>Genome analysis of multiple pathogenic isolates of Streptococcus agalactiae: implications for the microbial 'pan-genome'.</title>
        <authorList>
            <person name="Tettelin H."/>
            <person name="Masignani V."/>
            <person name="Cieslewicz M.J."/>
            <person name="Donati C."/>
            <person name="Medini D."/>
            <person name="Ward N.L."/>
            <person name="Angiuoli S.V."/>
            <person name="Crabtree J."/>
            <person name="Jones A.L."/>
            <person name="Durkin A.S."/>
            <person name="DeBoy R.T."/>
            <person name="Davidsen T.M."/>
            <person name="Mora M."/>
            <person name="Scarselli M."/>
            <person name="Margarit y Ros I."/>
            <person name="Peterson J.D."/>
            <person name="Hauser C.R."/>
            <person name="Sundaram J.P."/>
            <person name="Nelson W.C."/>
            <person name="Madupu R."/>
            <person name="Brinkac L.M."/>
            <person name="Dodson R.J."/>
            <person name="Rosovitz M.J."/>
            <person name="Sullivan S.A."/>
            <person name="Daugherty S.C."/>
            <person name="Haft D.H."/>
            <person name="Selengut J."/>
            <person name="Gwinn M.L."/>
            <person name="Zhou L."/>
            <person name="Zafar N."/>
            <person name="Khouri H."/>
            <person name="Radune D."/>
            <person name="Dimitrov G."/>
            <person name="Watkins K."/>
            <person name="O'Connor K.J."/>
            <person name="Smith S."/>
            <person name="Utterback T.R."/>
            <person name="White O."/>
            <person name="Rubens C.E."/>
            <person name="Grandi G."/>
            <person name="Madoff L.C."/>
            <person name="Kasper D.L."/>
            <person name="Telford J.L."/>
            <person name="Wessels M.R."/>
            <person name="Rappuoli R."/>
            <person name="Fraser C.M."/>
        </authorList>
    </citation>
    <scope>NUCLEOTIDE SEQUENCE [LARGE SCALE GENOMIC DNA]</scope>
    <source>
        <strain>ATCC 27591 / A909 / CDC SS700</strain>
    </source>
</reference>
<proteinExistence type="inferred from homology"/>
<dbReference type="EMBL" id="CP000114">
    <property type="protein sequence ID" value="ABA45113.1"/>
    <property type="molecule type" value="Genomic_DNA"/>
</dbReference>
<dbReference type="RefSeq" id="WP_001036759.1">
    <property type="nucleotide sequence ID" value="NC_007432.1"/>
</dbReference>
<dbReference type="SMR" id="Q3K1J8"/>
<dbReference type="KEGG" id="sak:SAK_0983"/>
<dbReference type="HOGENOM" id="CLU_085114_1_2_9"/>
<dbReference type="GO" id="GO:0005886">
    <property type="term" value="C:plasma membrane"/>
    <property type="evidence" value="ECO:0007669"/>
    <property type="project" value="UniProtKB-SubCell"/>
</dbReference>
<dbReference type="GO" id="GO:0045259">
    <property type="term" value="C:proton-transporting ATP synthase complex"/>
    <property type="evidence" value="ECO:0007669"/>
    <property type="project" value="UniProtKB-KW"/>
</dbReference>
<dbReference type="GO" id="GO:0046933">
    <property type="term" value="F:proton-transporting ATP synthase activity, rotational mechanism"/>
    <property type="evidence" value="ECO:0007669"/>
    <property type="project" value="UniProtKB-UniRule"/>
</dbReference>
<dbReference type="Gene3D" id="1.10.520.20">
    <property type="entry name" value="N-terminal domain of the delta subunit of the F1F0-ATP synthase"/>
    <property type="match status" value="1"/>
</dbReference>
<dbReference type="HAMAP" id="MF_01416">
    <property type="entry name" value="ATP_synth_delta_bact"/>
    <property type="match status" value="1"/>
</dbReference>
<dbReference type="InterPro" id="IPR026015">
    <property type="entry name" value="ATP_synth_OSCP/delta_N_sf"/>
</dbReference>
<dbReference type="InterPro" id="IPR000711">
    <property type="entry name" value="ATPase_OSCP/dsu"/>
</dbReference>
<dbReference type="NCBIfam" id="TIGR01145">
    <property type="entry name" value="ATP_synt_delta"/>
    <property type="match status" value="1"/>
</dbReference>
<dbReference type="NCBIfam" id="NF004401">
    <property type="entry name" value="PRK05758.2-1"/>
    <property type="match status" value="1"/>
</dbReference>
<dbReference type="PANTHER" id="PTHR11910">
    <property type="entry name" value="ATP SYNTHASE DELTA CHAIN"/>
    <property type="match status" value="1"/>
</dbReference>
<dbReference type="Pfam" id="PF00213">
    <property type="entry name" value="OSCP"/>
    <property type="match status" value="1"/>
</dbReference>
<dbReference type="PRINTS" id="PR00125">
    <property type="entry name" value="ATPASEDELTA"/>
</dbReference>
<dbReference type="SUPFAM" id="SSF47928">
    <property type="entry name" value="N-terminal domain of the delta subunit of the F1F0-ATP synthase"/>
    <property type="match status" value="1"/>
</dbReference>
<protein>
    <recommendedName>
        <fullName evidence="1">ATP synthase subunit delta</fullName>
    </recommendedName>
    <alternativeName>
        <fullName evidence="1">ATP synthase F(1) sector subunit delta</fullName>
    </alternativeName>
    <alternativeName>
        <fullName evidence="1">F-type ATPase subunit delta</fullName>
        <shortName evidence="1">F-ATPase subunit delta</shortName>
    </alternativeName>
</protein>